<reference key="1">
    <citation type="journal article" date="1999" name="J. Mammal. Evol.">
        <title>MtDNA evidence for repeated pulses of speciation within arvicoline and murid rodents.</title>
        <authorList>
            <person name="Conroy C.J."/>
            <person name="Cook J.A."/>
        </authorList>
    </citation>
    <scope>NUCLEOTIDE SEQUENCE [GENOMIC DNA]</scope>
</reference>
<geneLocation type="mitochondrion"/>
<feature type="chain" id="PRO_0000255063" description="Cytochrome b">
    <location>
        <begin position="1"/>
        <end position="380"/>
    </location>
</feature>
<feature type="transmembrane region" description="Helical" evidence="2">
    <location>
        <begin position="33"/>
        <end position="53"/>
    </location>
</feature>
<feature type="transmembrane region" description="Helical" evidence="2">
    <location>
        <begin position="77"/>
        <end position="98"/>
    </location>
</feature>
<feature type="transmembrane region" description="Helical" evidence="2">
    <location>
        <begin position="113"/>
        <end position="133"/>
    </location>
</feature>
<feature type="transmembrane region" description="Helical" evidence="2">
    <location>
        <begin position="178"/>
        <end position="198"/>
    </location>
</feature>
<feature type="transmembrane region" description="Helical" evidence="2">
    <location>
        <begin position="226"/>
        <end position="246"/>
    </location>
</feature>
<feature type="transmembrane region" description="Helical" evidence="2">
    <location>
        <begin position="288"/>
        <end position="308"/>
    </location>
</feature>
<feature type="transmembrane region" description="Helical" evidence="2">
    <location>
        <begin position="320"/>
        <end position="340"/>
    </location>
</feature>
<feature type="transmembrane region" description="Helical" evidence="2">
    <location>
        <begin position="347"/>
        <end position="367"/>
    </location>
</feature>
<feature type="binding site" description="axial binding residue" evidence="2">
    <location>
        <position position="83"/>
    </location>
    <ligand>
        <name>heme b</name>
        <dbReference type="ChEBI" id="CHEBI:60344"/>
        <label>b562</label>
    </ligand>
    <ligandPart>
        <name>Fe</name>
        <dbReference type="ChEBI" id="CHEBI:18248"/>
    </ligandPart>
</feature>
<feature type="binding site" description="axial binding residue" evidence="2">
    <location>
        <position position="97"/>
    </location>
    <ligand>
        <name>heme b</name>
        <dbReference type="ChEBI" id="CHEBI:60344"/>
        <label>b566</label>
    </ligand>
    <ligandPart>
        <name>Fe</name>
        <dbReference type="ChEBI" id="CHEBI:18248"/>
    </ligandPart>
</feature>
<feature type="binding site" description="axial binding residue" evidence="2">
    <location>
        <position position="182"/>
    </location>
    <ligand>
        <name>heme b</name>
        <dbReference type="ChEBI" id="CHEBI:60344"/>
        <label>b562</label>
    </ligand>
    <ligandPart>
        <name>Fe</name>
        <dbReference type="ChEBI" id="CHEBI:18248"/>
    </ligandPart>
</feature>
<feature type="binding site" description="axial binding residue" evidence="2">
    <location>
        <position position="196"/>
    </location>
    <ligand>
        <name>heme b</name>
        <dbReference type="ChEBI" id="CHEBI:60344"/>
        <label>b566</label>
    </ligand>
    <ligandPart>
        <name>Fe</name>
        <dbReference type="ChEBI" id="CHEBI:18248"/>
    </ligandPart>
</feature>
<feature type="binding site" evidence="2">
    <location>
        <position position="201"/>
    </location>
    <ligand>
        <name>a ubiquinone</name>
        <dbReference type="ChEBI" id="CHEBI:16389"/>
    </ligand>
</feature>
<sequence length="380" mass="42703">MTIIRKKHPLIKIINHAFIDLPAPSNISSWWNFGSLLGLCLIIQILTGLFLAMHYTSDTATAFSSVAHICRDVNYGWLIRYMHANGASMFFICLFLHVGRGIYYGSYNMIETWNMGIVLLFAVMATAFMGYVLPWGQMSFWGATVITNLLSAIPYIGTTLVEWIWGGFSVDKATLTRFFAFHFILPFIITALVLVHLLFLHETGSNNPTGLNSDADKIPFHPYYTIKDLLGALMLLLALMILVLFFPDILGDPDNYTPANPLNTPPHIKPEWYFLFAYAILRSIPNKLGGVLALILSILILALMPFLHTSKQRGLTFRPITQTMYWILVADLLILTWIGGQPVEYPFVIIGQAASIAYFAIIVIFMPIAGMIENIILDLD</sequence>
<gene>
    <name type="primary">MT-CYB</name>
    <name type="synonym">COB</name>
    <name type="synonym">CYTB</name>
    <name type="synonym">MTCYB</name>
</gene>
<keyword id="KW-0249">Electron transport</keyword>
<keyword id="KW-0349">Heme</keyword>
<keyword id="KW-0408">Iron</keyword>
<keyword id="KW-0472">Membrane</keyword>
<keyword id="KW-0479">Metal-binding</keyword>
<keyword id="KW-0496">Mitochondrion</keyword>
<keyword id="KW-0999">Mitochondrion inner membrane</keyword>
<keyword id="KW-0679">Respiratory chain</keyword>
<keyword id="KW-0812">Transmembrane</keyword>
<keyword id="KW-1133">Transmembrane helix</keyword>
<keyword id="KW-0813">Transport</keyword>
<keyword id="KW-0830">Ubiquinone</keyword>
<proteinExistence type="inferred from homology"/>
<name>CYB_LEMTI</name>
<comment type="function">
    <text evidence="2">Component of the ubiquinol-cytochrome c reductase complex (complex III or cytochrome b-c1 complex) that is part of the mitochondrial respiratory chain. The b-c1 complex mediates electron transfer from ubiquinol to cytochrome c. Contributes to the generation of a proton gradient across the mitochondrial membrane that is then used for ATP synthesis.</text>
</comment>
<comment type="cofactor">
    <cofactor evidence="2">
        <name>heme b</name>
        <dbReference type="ChEBI" id="CHEBI:60344"/>
    </cofactor>
    <text evidence="2">Binds 2 heme b groups non-covalently.</text>
</comment>
<comment type="subunit">
    <text evidence="2">The cytochrome bc1 complex contains 11 subunits: 3 respiratory subunits (MT-CYB, CYC1 and UQCRFS1), 2 core proteins (UQCRC1 and UQCRC2) and 6 low-molecular weight proteins (UQCRH/QCR6, UQCRB/QCR7, UQCRQ/QCR8, UQCR10/QCR9, UQCR11/QCR10 and a cleavage product of UQCRFS1). This cytochrome bc1 complex then forms a dimer.</text>
</comment>
<comment type="subcellular location">
    <subcellularLocation>
        <location evidence="2">Mitochondrion inner membrane</location>
        <topology evidence="2">Multi-pass membrane protein</topology>
    </subcellularLocation>
</comment>
<comment type="miscellaneous">
    <text evidence="1">Heme 1 (or BL or b562) is low-potential and absorbs at about 562 nm, and heme 2 (or BH or b566) is high-potential and absorbs at about 566 nm.</text>
</comment>
<comment type="similarity">
    <text evidence="3 4">Belongs to the cytochrome b family.</text>
</comment>
<comment type="caution">
    <text evidence="2">The full-length protein contains only eight transmembrane helices, not nine as predicted by bioinformatics tools.</text>
</comment>
<protein>
    <recommendedName>
        <fullName>Cytochrome b</fullName>
    </recommendedName>
    <alternativeName>
        <fullName>Complex III subunit 3</fullName>
    </alternativeName>
    <alternativeName>
        <fullName>Complex III subunit III</fullName>
    </alternativeName>
    <alternativeName>
        <fullName>Cytochrome b-c1 complex subunit 3</fullName>
    </alternativeName>
    <alternativeName>
        <fullName>Ubiquinol-cytochrome-c reductase complex cytochrome b subunit</fullName>
    </alternativeName>
</protein>
<organism>
    <name type="scientific">Lemmus trimucronatus</name>
    <name type="common">Brown lemming</name>
    <dbReference type="NCBI Taxonomy" id="84770"/>
    <lineage>
        <taxon>Eukaryota</taxon>
        <taxon>Metazoa</taxon>
        <taxon>Chordata</taxon>
        <taxon>Craniata</taxon>
        <taxon>Vertebrata</taxon>
        <taxon>Euteleostomi</taxon>
        <taxon>Mammalia</taxon>
        <taxon>Eutheria</taxon>
        <taxon>Euarchontoglires</taxon>
        <taxon>Glires</taxon>
        <taxon>Rodentia</taxon>
        <taxon>Myomorpha</taxon>
        <taxon>Muroidea</taxon>
        <taxon>Cricetidae</taxon>
        <taxon>Arvicolinae</taxon>
        <taxon>Lemmus</taxon>
    </lineage>
</organism>
<evidence type="ECO:0000250" key="1"/>
<evidence type="ECO:0000250" key="2">
    <source>
        <dbReference type="UniProtKB" id="P00157"/>
    </source>
</evidence>
<evidence type="ECO:0000255" key="3">
    <source>
        <dbReference type="PROSITE-ProRule" id="PRU00967"/>
    </source>
</evidence>
<evidence type="ECO:0000255" key="4">
    <source>
        <dbReference type="PROSITE-ProRule" id="PRU00968"/>
    </source>
</evidence>
<dbReference type="EMBL" id="AF119276">
    <property type="protein sequence ID" value="AAD43894.1"/>
    <property type="molecule type" value="Genomic_DNA"/>
</dbReference>
<dbReference type="SMR" id="Q9XNM0"/>
<dbReference type="GO" id="GO:0005743">
    <property type="term" value="C:mitochondrial inner membrane"/>
    <property type="evidence" value="ECO:0007669"/>
    <property type="project" value="UniProtKB-SubCell"/>
</dbReference>
<dbReference type="GO" id="GO:0045275">
    <property type="term" value="C:respiratory chain complex III"/>
    <property type="evidence" value="ECO:0007669"/>
    <property type="project" value="InterPro"/>
</dbReference>
<dbReference type="GO" id="GO:0046872">
    <property type="term" value="F:metal ion binding"/>
    <property type="evidence" value="ECO:0007669"/>
    <property type="project" value="UniProtKB-KW"/>
</dbReference>
<dbReference type="GO" id="GO:0008121">
    <property type="term" value="F:ubiquinol-cytochrome-c reductase activity"/>
    <property type="evidence" value="ECO:0007669"/>
    <property type="project" value="InterPro"/>
</dbReference>
<dbReference type="GO" id="GO:0006122">
    <property type="term" value="P:mitochondrial electron transport, ubiquinol to cytochrome c"/>
    <property type="evidence" value="ECO:0007669"/>
    <property type="project" value="TreeGrafter"/>
</dbReference>
<dbReference type="CDD" id="cd00290">
    <property type="entry name" value="cytochrome_b_C"/>
    <property type="match status" value="1"/>
</dbReference>
<dbReference type="CDD" id="cd00284">
    <property type="entry name" value="Cytochrome_b_N"/>
    <property type="match status" value="1"/>
</dbReference>
<dbReference type="FunFam" id="1.20.810.10:FF:000002">
    <property type="entry name" value="Cytochrome b"/>
    <property type="match status" value="1"/>
</dbReference>
<dbReference type="Gene3D" id="1.20.810.10">
    <property type="entry name" value="Cytochrome Bc1 Complex, Chain C"/>
    <property type="match status" value="1"/>
</dbReference>
<dbReference type="InterPro" id="IPR005798">
    <property type="entry name" value="Cyt_b/b6_C"/>
</dbReference>
<dbReference type="InterPro" id="IPR036150">
    <property type="entry name" value="Cyt_b/b6_C_sf"/>
</dbReference>
<dbReference type="InterPro" id="IPR005797">
    <property type="entry name" value="Cyt_b/b6_N"/>
</dbReference>
<dbReference type="InterPro" id="IPR027387">
    <property type="entry name" value="Cytb/b6-like_sf"/>
</dbReference>
<dbReference type="InterPro" id="IPR030689">
    <property type="entry name" value="Cytochrome_b"/>
</dbReference>
<dbReference type="InterPro" id="IPR048260">
    <property type="entry name" value="Cytochrome_b_C_euk/bac"/>
</dbReference>
<dbReference type="InterPro" id="IPR048259">
    <property type="entry name" value="Cytochrome_b_N_euk/bac"/>
</dbReference>
<dbReference type="InterPro" id="IPR016174">
    <property type="entry name" value="Di-haem_cyt_TM"/>
</dbReference>
<dbReference type="PANTHER" id="PTHR19271">
    <property type="entry name" value="CYTOCHROME B"/>
    <property type="match status" value="1"/>
</dbReference>
<dbReference type="PANTHER" id="PTHR19271:SF16">
    <property type="entry name" value="CYTOCHROME B"/>
    <property type="match status" value="1"/>
</dbReference>
<dbReference type="Pfam" id="PF00032">
    <property type="entry name" value="Cytochrom_B_C"/>
    <property type="match status" value="1"/>
</dbReference>
<dbReference type="Pfam" id="PF00033">
    <property type="entry name" value="Cytochrome_B"/>
    <property type="match status" value="1"/>
</dbReference>
<dbReference type="PIRSF" id="PIRSF038885">
    <property type="entry name" value="COB"/>
    <property type="match status" value="1"/>
</dbReference>
<dbReference type="SUPFAM" id="SSF81648">
    <property type="entry name" value="a domain/subunit of cytochrome bc1 complex (Ubiquinol-cytochrome c reductase)"/>
    <property type="match status" value="1"/>
</dbReference>
<dbReference type="SUPFAM" id="SSF81342">
    <property type="entry name" value="Transmembrane di-heme cytochromes"/>
    <property type="match status" value="1"/>
</dbReference>
<dbReference type="PROSITE" id="PS51003">
    <property type="entry name" value="CYTB_CTER"/>
    <property type="match status" value="1"/>
</dbReference>
<dbReference type="PROSITE" id="PS51002">
    <property type="entry name" value="CYTB_NTER"/>
    <property type="match status" value="1"/>
</dbReference>
<accession>Q9XNM0</accession>